<reference key="1">
    <citation type="journal article" date="2008" name="Genome Res.">
        <title>The genome of Pelotomaculum thermopropionicum reveals niche-associated evolution in anaerobic microbiota.</title>
        <authorList>
            <person name="Kosaka T."/>
            <person name="Kato S."/>
            <person name="Shimoyama T."/>
            <person name="Ishii S."/>
            <person name="Abe T."/>
            <person name="Watanabe K."/>
        </authorList>
    </citation>
    <scope>NUCLEOTIDE SEQUENCE [LARGE SCALE GENOMIC DNA]</scope>
    <source>
        <strain>DSM 13744 / JCM 10971 / SI</strain>
    </source>
</reference>
<evidence type="ECO:0000255" key="1">
    <source>
        <dbReference type="HAMAP-Rule" id="MF_00185"/>
    </source>
</evidence>
<proteinExistence type="inferred from homology"/>
<feature type="chain" id="PRO_0000377260" description="tRNA dimethylallyltransferase">
    <location>
        <begin position="1"/>
        <end position="314"/>
    </location>
</feature>
<feature type="region of interest" description="Interaction with substrate tRNA" evidence="1">
    <location>
        <begin position="40"/>
        <end position="43"/>
    </location>
</feature>
<feature type="binding site" evidence="1">
    <location>
        <begin position="15"/>
        <end position="22"/>
    </location>
    <ligand>
        <name>ATP</name>
        <dbReference type="ChEBI" id="CHEBI:30616"/>
    </ligand>
</feature>
<feature type="binding site" evidence="1">
    <location>
        <begin position="17"/>
        <end position="22"/>
    </location>
    <ligand>
        <name>substrate</name>
    </ligand>
</feature>
<feature type="site" description="Interaction with substrate tRNA" evidence="1">
    <location>
        <position position="106"/>
    </location>
</feature>
<feature type="site" description="Interaction with substrate tRNA" evidence="1">
    <location>
        <position position="129"/>
    </location>
</feature>
<comment type="function">
    <text evidence="1">Catalyzes the transfer of a dimethylallyl group onto the adenine at position 37 in tRNAs that read codons beginning with uridine, leading to the formation of N6-(dimethylallyl)adenosine (i(6)A).</text>
</comment>
<comment type="catalytic activity">
    <reaction evidence="1">
        <text>adenosine(37) in tRNA + dimethylallyl diphosphate = N(6)-dimethylallyladenosine(37) in tRNA + diphosphate</text>
        <dbReference type="Rhea" id="RHEA:26482"/>
        <dbReference type="Rhea" id="RHEA-COMP:10162"/>
        <dbReference type="Rhea" id="RHEA-COMP:10375"/>
        <dbReference type="ChEBI" id="CHEBI:33019"/>
        <dbReference type="ChEBI" id="CHEBI:57623"/>
        <dbReference type="ChEBI" id="CHEBI:74411"/>
        <dbReference type="ChEBI" id="CHEBI:74415"/>
        <dbReference type="EC" id="2.5.1.75"/>
    </reaction>
</comment>
<comment type="cofactor">
    <cofactor evidence="1">
        <name>Mg(2+)</name>
        <dbReference type="ChEBI" id="CHEBI:18420"/>
    </cofactor>
</comment>
<comment type="subunit">
    <text evidence="1">Monomer.</text>
</comment>
<comment type="similarity">
    <text evidence="1">Belongs to the IPP transferase family.</text>
</comment>
<gene>
    <name evidence="1" type="primary">miaA</name>
    <name type="ordered locus">PTH_1344</name>
</gene>
<accession>A5D2K7</accession>
<sequence length="314" mass="35585">MSSENKKEPLLVITGPTATGKSEVGVLVAEKLGGEIISADSMLIYRGMDIGTAKPTSADRRGIPHHMIDIVEPDQDYNVALYRKQAMAVIKKVLERGNLPIVVGGTGLYIEALIRNYSFGGAGTDKTLRKKLQKEAAESPFLLHQRLAKIDPATASQLHPANTRRVIRALEVYYLTGKPISNFKRLDEPDPPFNLLMFGLTMEREALYRRIEKRVDRMIAMGLIEEVQNLLQRGFSPRLNSMRGLGYKEMISYLNGTLSLEEAVEVLKRNTRRFAKRQMTWFRRYKEIRWLKIENFADCEAIAQEIARCTEGVL</sequence>
<dbReference type="EC" id="2.5.1.75" evidence="1"/>
<dbReference type="EMBL" id="AP009389">
    <property type="protein sequence ID" value="BAF59525.1"/>
    <property type="molecule type" value="Genomic_DNA"/>
</dbReference>
<dbReference type="SMR" id="A5D2K7"/>
<dbReference type="STRING" id="370438.PTH_1344"/>
<dbReference type="KEGG" id="pth:PTH_1344"/>
<dbReference type="eggNOG" id="COG0324">
    <property type="taxonomic scope" value="Bacteria"/>
</dbReference>
<dbReference type="HOGENOM" id="CLU_032616_0_1_9"/>
<dbReference type="Proteomes" id="UP000006556">
    <property type="component" value="Chromosome"/>
</dbReference>
<dbReference type="GO" id="GO:0005524">
    <property type="term" value="F:ATP binding"/>
    <property type="evidence" value="ECO:0007669"/>
    <property type="project" value="UniProtKB-UniRule"/>
</dbReference>
<dbReference type="GO" id="GO:0052381">
    <property type="term" value="F:tRNA dimethylallyltransferase activity"/>
    <property type="evidence" value="ECO:0007669"/>
    <property type="project" value="UniProtKB-UniRule"/>
</dbReference>
<dbReference type="GO" id="GO:0006400">
    <property type="term" value="P:tRNA modification"/>
    <property type="evidence" value="ECO:0007669"/>
    <property type="project" value="TreeGrafter"/>
</dbReference>
<dbReference type="Gene3D" id="1.10.20.140">
    <property type="match status" value="1"/>
</dbReference>
<dbReference type="Gene3D" id="3.40.50.300">
    <property type="entry name" value="P-loop containing nucleotide triphosphate hydrolases"/>
    <property type="match status" value="1"/>
</dbReference>
<dbReference type="HAMAP" id="MF_00185">
    <property type="entry name" value="IPP_trans"/>
    <property type="match status" value="1"/>
</dbReference>
<dbReference type="InterPro" id="IPR039657">
    <property type="entry name" value="Dimethylallyltransferase"/>
</dbReference>
<dbReference type="InterPro" id="IPR018022">
    <property type="entry name" value="IPT"/>
</dbReference>
<dbReference type="InterPro" id="IPR027417">
    <property type="entry name" value="P-loop_NTPase"/>
</dbReference>
<dbReference type="NCBIfam" id="TIGR00174">
    <property type="entry name" value="miaA"/>
    <property type="match status" value="1"/>
</dbReference>
<dbReference type="PANTHER" id="PTHR11088">
    <property type="entry name" value="TRNA DIMETHYLALLYLTRANSFERASE"/>
    <property type="match status" value="1"/>
</dbReference>
<dbReference type="PANTHER" id="PTHR11088:SF60">
    <property type="entry name" value="TRNA DIMETHYLALLYLTRANSFERASE"/>
    <property type="match status" value="1"/>
</dbReference>
<dbReference type="Pfam" id="PF01715">
    <property type="entry name" value="IPPT"/>
    <property type="match status" value="1"/>
</dbReference>
<dbReference type="SUPFAM" id="SSF52540">
    <property type="entry name" value="P-loop containing nucleoside triphosphate hydrolases"/>
    <property type="match status" value="1"/>
</dbReference>
<protein>
    <recommendedName>
        <fullName evidence="1">tRNA dimethylallyltransferase</fullName>
        <ecNumber evidence="1">2.5.1.75</ecNumber>
    </recommendedName>
    <alternativeName>
        <fullName evidence="1">Dimethylallyl diphosphate:tRNA dimethylallyltransferase</fullName>
        <shortName evidence="1">DMAPP:tRNA dimethylallyltransferase</shortName>
        <shortName evidence="1">DMATase</shortName>
    </alternativeName>
    <alternativeName>
        <fullName evidence="1">Isopentenyl-diphosphate:tRNA isopentenyltransferase</fullName>
        <shortName evidence="1">IPP transferase</shortName>
        <shortName evidence="1">IPPT</shortName>
        <shortName evidence="1">IPTase</shortName>
    </alternativeName>
</protein>
<organism>
    <name type="scientific">Pelotomaculum thermopropionicum (strain DSM 13744 / JCM 10971 / SI)</name>
    <dbReference type="NCBI Taxonomy" id="370438"/>
    <lineage>
        <taxon>Bacteria</taxon>
        <taxon>Bacillati</taxon>
        <taxon>Bacillota</taxon>
        <taxon>Clostridia</taxon>
        <taxon>Eubacteriales</taxon>
        <taxon>Desulfotomaculaceae</taxon>
        <taxon>Pelotomaculum</taxon>
    </lineage>
</organism>
<name>MIAA_PELTS</name>
<keyword id="KW-0067">ATP-binding</keyword>
<keyword id="KW-0460">Magnesium</keyword>
<keyword id="KW-0547">Nucleotide-binding</keyword>
<keyword id="KW-1185">Reference proteome</keyword>
<keyword id="KW-0808">Transferase</keyword>
<keyword id="KW-0819">tRNA processing</keyword>